<sequence>MPRWEAAALLAAIVGVCVWSDDPGKVISDRYAVYWNRSNPRFHRGDYTVEVSINDYLDIYCPHYEEPLPAERMERYVLYMVNYEGHASCDHRQKGFKRWECNRPDSPSGPLKFSEKFQLFTPFSLGFEFRPGHEYYYISASPLNVVDRPCLKLKVYVRPTNDSLYESPEPIFTSNNSCCSLAVPRAVLVAAPVFWTLLGS</sequence>
<gene>
    <name type="primary">EFNA2</name>
    <name type="synonym">ELF1</name>
    <name type="synonym">EPLG6</name>
    <name type="synonym">LERK6</name>
</gene>
<proteinExistence type="evidence at transcript level"/>
<feature type="signal peptide" evidence="2">
    <location>
        <begin position="1"/>
        <end position="22"/>
    </location>
</feature>
<feature type="chain" id="PRO_0000008365" description="Ephrin-A2">
    <location>
        <begin position="23"/>
        <end position="175"/>
    </location>
</feature>
<feature type="propeptide" id="PRO_0000008366" description="Removed in mature form" evidence="2">
    <location>
        <begin position="176"/>
        <end position="200"/>
    </location>
</feature>
<feature type="domain" description="Ephrin RBD" evidence="3">
    <location>
        <begin position="28"/>
        <end position="161"/>
    </location>
</feature>
<feature type="lipid moiety-binding region" description="GPI-anchor amidated asparagine" evidence="2">
    <location>
        <position position="175"/>
    </location>
</feature>
<feature type="glycosylation site" description="N-linked (GlcNAc...) asparagine" evidence="2">
    <location>
        <position position="36"/>
    </location>
</feature>
<feature type="glycosylation site" description="N-linked (GlcNAc...) asparagine" evidence="2">
    <location>
        <position position="161"/>
    </location>
</feature>
<feature type="glycosylation site" description="N-linked (GlcNAc...) asparagine" evidence="2">
    <location>
        <position position="175"/>
    </location>
</feature>
<feature type="disulfide bond" evidence="3">
    <location>
        <begin position="61"/>
        <end position="101"/>
    </location>
</feature>
<feature type="disulfide bond" evidence="3">
    <location>
        <begin position="89"/>
        <end position="150"/>
    </location>
</feature>
<evidence type="ECO:0000250" key="1"/>
<evidence type="ECO:0000255" key="2"/>
<evidence type="ECO:0000255" key="3">
    <source>
        <dbReference type="PROSITE-ProRule" id="PRU00884"/>
    </source>
</evidence>
<evidence type="ECO:0000305" key="4"/>
<dbReference type="EMBL" id="L40932">
    <property type="protein sequence ID" value="AAC42229.1"/>
    <property type="molecule type" value="mRNA"/>
</dbReference>
<dbReference type="RefSeq" id="NP_990314.1">
    <property type="nucleotide sequence ID" value="NM_204983.1"/>
</dbReference>
<dbReference type="SMR" id="P52802"/>
<dbReference type="FunCoup" id="P52802">
    <property type="interactions" value="157"/>
</dbReference>
<dbReference type="STRING" id="9031.ENSGALP00000045853"/>
<dbReference type="GlyCosmos" id="P52802">
    <property type="glycosylation" value="3 sites, No reported glycans"/>
</dbReference>
<dbReference type="GlyGen" id="P52802">
    <property type="glycosylation" value="3 sites"/>
</dbReference>
<dbReference type="GeneID" id="395831"/>
<dbReference type="KEGG" id="gga:395831"/>
<dbReference type="CTD" id="1943"/>
<dbReference type="VEuPathDB" id="HostDB:geneid_395831"/>
<dbReference type="InParanoid" id="P52802"/>
<dbReference type="OMA" id="HMEHYVL"/>
<dbReference type="OrthoDB" id="6250301at2759"/>
<dbReference type="PhylomeDB" id="P52802"/>
<dbReference type="PRO" id="PR:P52802"/>
<dbReference type="Proteomes" id="UP000000539">
    <property type="component" value="Unassembled WGS sequence"/>
</dbReference>
<dbReference type="GO" id="GO:0005886">
    <property type="term" value="C:plasma membrane"/>
    <property type="evidence" value="ECO:0000318"/>
    <property type="project" value="GO_Central"/>
</dbReference>
<dbReference type="GO" id="GO:0098552">
    <property type="term" value="C:side of membrane"/>
    <property type="evidence" value="ECO:0007669"/>
    <property type="project" value="UniProtKB-KW"/>
</dbReference>
<dbReference type="GO" id="GO:0046875">
    <property type="term" value="F:ephrin receptor binding"/>
    <property type="evidence" value="ECO:0000318"/>
    <property type="project" value="GO_Central"/>
</dbReference>
<dbReference type="GO" id="GO:0007411">
    <property type="term" value="P:axon guidance"/>
    <property type="evidence" value="ECO:0000318"/>
    <property type="project" value="GO_Central"/>
</dbReference>
<dbReference type="GO" id="GO:0046849">
    <property type="term" value="P:bone remodeling"/>
    <property type="evidence" value="ECO:0000318"/>
    <property type="project" value="GO_Central"/>
</dbReference>
<dbReference type="GO" id="GO:0048013">
    <property type="term" value="P:ephrin receptor signaling pathway"/>
    <property type="evidence" value="ECO:0000250"/>
    <property type="project" value="UniProtKB"/>
</dbReference>
<dbReference type="GO" id="GO:0030316">
    <property type="term" value="P:osteoclast differentiation"/>
    <property type="evidence" value="ECO:0000318"/>
    <property type="project" value="GO_Central"/>
</dbReference>
<dbReference type="CDD" id="cd10425">
    <property type="entry name" value="Ephrin-A_Ectodomain"/>
    <property type="match status" value="1"/>
</dbReference>
<dbReference type="FunFam" id="2.60.40.420:FF:000005">
    <property type="entry name" value="Ephrin A5"/>
    <property type="match status" value="1"/>
</dbReference>
<dbReference type="Gene3D" id="2.60.40.420">
    <property type="entry name" value="Cupredoxins - blue copper proteins"/>
    <property type="match status" value="1"/>
</dbReference>
<dbReference type="InterPro" id="IPR008972">
    <property type="entry name" value="Cupredoxin"/>
</dbReference>
<dbReference type="InterPro" id="IPR031328">
    <property type="entry name" value="Ephrin"/>
</dbReference>
<dbReference type="InterPro" id="IPR034252">
    <property type="entry name" value="Ephrin-A_Ecto"/>
</dbReference>
<dbReference type="InterPro" id="IPR019765">
    <property type="entry name" value="Ephrin_CS"/>
</dbReference>
<dbReference type="InterPro" id="IPR001799">
    <property type="entry name" value="Ephrin_RBD"/>
</dbReference>
<dbReference type="PANTHER" id="PTHR11304">
    <property type="entry name" value="EPHRIN"/>
    <property type="match status" value="1"/>
</dbReference>
<dbReference type="PANTHER" id="PTHR11304:SF4">
    <property type="entry name" value="EPHRIN-A2"/>
    <property type="match status" value="1"/>
</dbReference>
<dbReference type="Pfam" id="PF00812">
    <property type="entry name" value="Ephrin"/>
    <property type="match status" value="1"/>
</dbReference>
<dbReference type="PRINTS" id="PR01347">
    <property type="entry name" value="EPHRIN"/>
</dbReference>
<dbReference type="SUPFAM" id="SSF49503">
    <property type="entry name" value="Cupredoxins"/>
    <property type="match status" value="1"/>
</dbReference>
<dbReference type="PROSITE" id="PS01299">
    <property type="entry name" value="EPHRIN_RBD_1"/>
    <property type="match status" value="1"/>
</dbReference>
<dbReference type="PROSITE" id="PS51551">
    <property type="entry name" value="EPHRIN_RBD_2"/>
    <property type="match status" value="1"/>
</dbReference>
<accession>P52802</accession>
<reference key="1">
    <citation type="journal article" date="1995" name="Cell">
        <title>Complementary gradients in expression and binding of ELF-1 and Mek4 in development of the topographic retinotectal projection map.</title>
        <authorList>
            <person name="Cheng H.J."/>
            <person name="Nakamoto M."/>
            <person name="Bergemann A.D."/>
            <person name="Flanagan J.G."/>
        </authorList>
    </citation>
    <scope>NUCLEOTIDE SEQUENCE [MRNA]</scope>
</reference>
<name>EFNA2_CHICK</name>
<organism>
    <name type="scientific">Gallus gallus</name>
    <name type="common">Chicken</name>
    <dbReference type="NCBI Taxonomy" id="9031"/>
    <lineage>
        <taxon>Eukaryota</taxon>
        <taxon>Metazoa</taxon>
        <taxon>Chordata</taxon>
        <taxon>Craniata</taxon>
        <taxon>Vertebrata</taxon>
        <taxon>Euteleostomi</taxon>
        <taxon>Archelosauria</taxon>
        <taxon>Archosauria</taxon>
        <taxon>Dinosauria</taxon>
        <taxon>Saurischia</taxon>
        <taxon>Theropoda</taxon>
        <taxon>Coelurosauria</taxon>
        <taxon>Aves</taxon>
        <taxon>Neognathae</taxon>
        <taxon>Galloanserae</taxon>
        <taxon>Galliformes</taxon>
        <taxon>Phasianidae</taxon>
        <taxon>Phasianinae</taxon>
        <taxon>Gallus</taxon>
    </lineage>
</organism>
<protein>
    <recommendedName>
        <fullName>Ephrin-A2</fullName>
    </recommendedName>
    <alternativeName>
        <fullName>ELF-1</fullName>
    </alternativeName>
    <alternativeName>
        <fullName>EPH-related receptor tyrosine kinase ligand 6</fullName>
        <shortName>LERK-6</shortName>
    </alternativeName>
</protein>
<keyword id="KW-1003">Cell membrane</keyword>
<keyword id="KW-1015">Disulfide bond</keyword>
<keyword id="KW-0325">Glycoprotein</keyword>
<keyword id="KW-0336">GPI-anchor</keyword>
<keyword id="KW-0449">Lipoprotein</keyword>
<keyword id="KW-0472">Membrane</keyword>
<keyword id="KW-1185">Reference proteome</keyword>
<keyword id="KW-0732">Signal</keyword>
<comment type="function">
    <text evidence="1">Cell surface GPI-bound ligand for Eph receptors, a family of receptor tyrosine kinases which are crucial for migration, repulsion and adhesion during neuronal, vascular and epithelial development. Binds promiscuously Eph receptors residing on adjacent cells, leading to contact-dependent bidirectional signaling into neighboring cells. The signaling pathway downstream of the receptor is referred to as forward signaling while the signaling pathway downstream of the ephrin ligand is referred to as reverse signaling. With the EPHA2 receptor may play a role in bone remodeling through regulation of osteoclastogenesis and osteoblastogenesis (By similarity).</text>
</comment>
<comment type="subunit">
    <text evidence="1">Binds to the receptor tyrosine kinases EPHA3, EPHA4 and EPHA5. Interacts with EPHA8; activates EPHA8 (By similarity).</text>
</comment>
<comment type="subcellular location">
    <subcellularLocation>
        <location evidence="4">Cell membrane</location>
        <topology evidence="4">Lipid-anchor</topology>
        <topology evidence="4">GPI-anchor</topology>
    </subcellularLocation>
</comment>
<comment type="tissue specificity">
    <text>Expressed in a gradient across the tectum being more strongly expressed at the posterior pole.</text>
</comment>
<comment type="similarity">
    <text evidence="3">Belongs to the ephrin family.</text>
</comment>